<keyword id="KW-0067">ATP-binding</keyword>
<keyword id="KW-0963">Cytoplasm</keyword>
<keyword id="KW-0418">Kinase</keyword>
<keyword id="KW-0460">Magnesium</keyword>
<keyword id="KW-0479">Metal-binding</keyword>
<keyword id="KW-0547">Nucleotide-binding</keyword>
<keyword id="KW-1185">Reference proteome</keyword>
<keyword id="KW-0808">Transferase</keyword>
<comment type="function">
    <text evidence="1">Catalyzes the formation of acetyl phosphate from acetate and ATP. Can also catalyze the reverse reaction.</text>
</comment>
<comment type="catalytic activity">
    <reaction evidence="1">
        <text>acetate + ATP = acetyl phosphate + ADP</text>
        <dbReference type="Rhea" id="RHEA:11352"/>
        <dbReference type="ChEBI" id="CHEBI:22191"/>
        <dbReference type="ChEBI" id="CHEBI:30089"/>
        <dbReference type="ChEBI" id="CHEBI:30616"/>
        <dbReference type="ChEBI" id="CHEBI:456216"/>
        <dbReference type="EC" id="2.7.2.1"/>
    </reaction>
</comment>
<comment type="cofactor">
    <cofactor evidence="1">
        <name>Mg(2+)</name>
        <dbReference type="ChEBI" id="CHEBI:18420"/>
    </cofactor>
    <cofactor evidence="1">
        <name>Mn(2+)</name>
        <dbReference type="ChEBI" id="CHEBI:29035"/>
    </cofactor>
    <text evidence="1">Mg(2+). Can also accept Mn(2+).</text>
</comment>
<comment type="pathway">
    <text evidence="1">Metabolic intermediate biosynthesis; acetyl-CoA biosynthesis; acetyl-CoA from acetate: step 1/2.</text>
</comment>
<comment type="subunit">
    <text evidence="1">Homodimer.</text>
</comment>
<comment type="subcellular location">
    <subcellularLocation>
        <location evidence="1">Cytoplasm</location>
    </subcellularLocation>
</comment>
<comment type="similarity">
    <text evidence="1">Belongs to the acetokinase family.</text>
</comment>
<feature type="chain" id="PRO_1000116798" description="Acetate kinase">
    <location>
        <begin position="1"/>
        <end position="406"/>
    </location>
</feature>
<feature type="active site" description="Proton donor/acceptor" evidence="1">
    <location>
        <position position="149"/>
    </location>
</feature>
<feature type="binding site" evidence="1">
    <location>
        <position position="8"/>
    </location>
    <ligand>
        <name>Mg(2+)</name>
        <dbReference type="ChEBI" id="CHEBI:18420"/>
    </ligand>
</feature>
<feature type="binding site" evidence="1">
    <location>
        <position position="15"/>
    </location>
    <ligand>
        <name>ATP</name>
        <dbReference type="ChEBI" id="CHEBI:30616"/>
    </ligand>
</feature>
<feature type="binding site" evidence="1">
    <location>
        <position position="92"/>
    </location>
    <ligand>
        <name>substrate</name>
    </ligand>
</feature>
<feature type="binding site" evidence="1">
    <location>
        <begin position="209"/>
        <end position="213"/>
    </location>
    <ligand>
        <name>ATP</name>
        <dbReference type="ChEBI" id="CHEBI:30616"/>
    </ligand>
</feature>
<feature type="binding site" evidence="1">
    <location>
        <begin position="283"/>
        <end position="285"/>
    </location>
    <ligand>
        <name>ATP</name>
        <dbReference type="ChEBI" id="CHEBI:30616"/>
    </ligand>
</feature>
<feature type="binding site" evidence="1">
    <location>
        <begin position="331"/>
        <end position="335"/>
    </location>
    <ligand>
        <name>ATP</name>
        <dbReference type="ChEBI" id="CHEBI:30616"/>
    </ligand>
</feature>
<feature type="binding site" evidence="1">
    <location>
        <position position="385"/>
    </location>
    <ligand>
        <name>Mg(2+)</name>
        <dbReference type="ChEBI" id="CHEBI:18420"/>
    </ligand>
</feature>
<feature type="site" description="Transition state stabilizer" evidence="1">
    <location>
        <position position="181"/>
    </location>
</feature>
<feature type="site" description="Transition state stabilizer" evidence="1">
    <location>
        <position position="242"/>
    </location>
</feature>
<reference key="1">
    <citation type="journal article" date="2010" name="BMC Genomics">
        <title>Complete genome sequence and lifestyle of black-pigmented Corynebacterium aurimucosum ATCC 700975 (formerly C. nigricans CN-1) isolated from a vaginal swab of a woman with spontaneous abortion.</title>
        <authorList>
            <person name="Trost E."/>
            <person name="Gotker S."/>
            <person name="Schneider J."/>
            <person name="Schneiker-Bekel S."/>
            <person name="Szczepanowski R."/>
            <person name="Tilker A."/>
            <person name="Viehoever P."/>
            <person name="Arnold W."/>
            <person name="Bekel T."/>
            <person name="Blom J."/>
            <person name="Gartemann K.H."/>
            <person name="Linke B."/>
            <person name="Goesmann A."/>
            <person name="Puhler A."/>
            <person name="Shukla S.K."/>
            <person name="Tauch A."/>
        </authorList>
    </citation>
    <scope>NUCLEOTIDE SEQUENCE [LARGE SCALE GENOMIC DNA]</scope>
    <source>
        <strain>ATCC 700975 / DSM 44827 / CIP 107346 / CN-1</strain>
    </source>
</reference>
<name>ACKA_CORA7</name>
<protein>
    <recommendedName>
        <fullName evidence="1">Acetate kinase</fullName>
        <ecNumber evidence="1">2.7.2.1</ecNumber>
    </recommendedName>
    <alternativeName>
        <fullName evidence="1">Acetokinase</fullName>
    </alternativeName>
</protein>
<organism>
    <name type="scientific">Corynebacterium aurimucosum (strain ATCC 700975 / DSM 44827 / CIP 107346 / CN-1)</name>
    <name type="common">Corynebacterium nigricans</name>
    <dbReference type="NCBI Taxonomy" id="548476"/>
    <lineage>
        <taxon>Bacteria</taxon>
        <taxon>Bacillati</taxon>
        <taxon>Actinomycetota</taxon>
        <taxon>Actinomycetes</taxon>
        <taxon>Mycobacteriales</taxon>
        <taxon>Corynebacteriaceae</taxon>
        <taxon>Corynebacterium</taxon>
    </lineage>
</organism>
<evidence type="ECO:0000255" key="1">
    <source>
        <dbReference type="HAMAP-Rule" id="MF_00020"/>
    </source>
</evidence>
<accession>C3PJJ2</accession>
<gene>
    <name evidence="1" type="primary">ackA</name>
    <name type="ordered locus">cauri_2287</name>
</gene>
<sequence length="406" mass="44267">MAYVLVLNSGSSSVKFQLVDPESSATDTPLVSGLVEQVGEPQGAVTVKTGGEEFKEELEIPTHSFGLDRAFSIMHEHGVGPTDVEVIAVGHRVVHGGRLFSEPQLIVDQIESMIEDLIPLAPLHNPANLDGIRVARKLLPEIPHVAVFDTAFFNHMPPAAALYAINNDVASQYDIRRYGFHGTSHEFVSQQVPKLLDRDPGHVHQITLHLGNGASAAAIRNGRPIDTSMGLTPLAGLAMGTRSGDIDPGIIFHLSREAGMSIDEIDNLLNKRSGVKGIAGVNDFRVLRERINNEDQDAWLAYNIYIHQLRRFIGAYMIALGRVDAITFTAGVGENDTEVRQDSLYNLDMYGIDFDKEANLVRSKEPRMISTADSQVKVFVVPTNEELAIAQKSAGIAAMAREAGLY</sequence>
<proteinExistence type="inferred from homology"/>
<dbReference type="EC" id="2.7.2.1" evidence="1"/>
<dbReference type="EMBL" id="CP001601">
    <property type="protein sequence ID" value="ACP33878.1"/>
    <property type="molecule type" value="Genomic_DNA"/>
</dbReference>
<dbReference type="RefSeq" id="WP_010188744.1">
    <property type="nucleotide sequence ID" value="NZ_ACLH01000048.1"/>
</dbReference>
<dbReference type="SMR" id="C3PJJ2"/>
<dbReference type="STRING" id="548476.cauri_2287"/>
<dbReference type="GeneID" id="31924936"/>
<dbReference type="KEGG" id="car:cauri_2287"/>
<dbReference type="eggNOG" id="COG0282">
    <property type="taxonomic scope" value="Bacteria"/>
</dbReference>
<dbReference type="HOGENOM" id="CLU_020352_0_1_11"/>
<dbReference type="OrthoDB" id="9802453at2"/>
<dbReference type="UniPathway" id="UPA00340">
    <property type="reaction ID" value="UER00458"/>
</dbReference>
<dbReference type="Proteomes" id="UP000002077">
    <property type="component" value="Chromosome"/>
</dbReference>
<dbReference type="GO" id="GO:0005737">
    <property type="term" value="C:cytoplasm"/>
    <property type="evidence" value="ECO:0007669"/>
    <property type="project" value="UniProtKB-SubCell"/>
</dbReference>
<dbReference type="GO" id="GO:0008776">
    <property type="term" value="F:acetate kinase activity"/>
    <property type="evidence" value="ECO:0007669"/>
    <property type="project" value="UniProtKB-UniRule"/>
</dbReference>
<dbReference type="GO" id="GO:0005524">
    <property type="term" value="F:ATP binding"/>
    <property type="evidence" value="ECO:0007669"/>
    <property type="project" value="UniProtKB-KW"/>
</dbReference>
<dbReference type="GO" id="GO:0000287">
    <property type="term" value="F:magnesium ion binding"/>
    <property type="evidence" value="ECO:0007669"/>
    <property type="project" value="UniProtKB-UniRule"/>
</dbReference>
<dbReference type="GO" id="GO:0006083">
    <property type="term" value="P:acetate metabolic process"/>
    <property type="evidence" value="ECO:0007669"/>
    <property type="project" value="TreeGrafter"/>
</dbReference>
<dbReference type="GO" id="GO:0006085">
    <property type="term" value="P:acetyl-CoA biosynthetic process"/>
    <property type="evidence" value="ECO:0007669"/>
    <property type="project" value="UniProtKB-UniRule"/>
</dbReference>
<dbReference type="CDD" id="cd24010">
    <property type="entry name" value="ASKHA_NBD_AcK_PK"/>
    <property type="match status" value="1"/>
</dbReference>
<dbReference type="Gene3D" id="3.30.420.40">
    <property type="match status" value="2"/>
</dbReference>
<dbReference type="HAMAP" id="MF_00020">
    <property type="entry name" value="Acetate_kinase"/>
    <property type="match status" value="1"/>
</dbReference>
<dbReference type="InterPro" id="IPR004372">
    <property type="entry name" value="Ac/propionate_kinase"/>
</dbReference>
<dbReference type="InterPro" id="IPR000890">
    <property type="entry name" value="Aliphatic_acid_kin_short-chain"/>
</dbReference>
<dbReference type="InterPro" id="IPR023865">
    <property type="entry name" value="Aliphatic_acid_kinase_CS"/>
</dbReference>
<dbReference type="InterPro" id="IPR043129">
    <property type="entry name" value="ATPase_NBD"/>
</dbReference>
<dbReference type="NCBIfam" id="TIGR00016">
    <property type="entry name" value="ackA"/>
    <property type="match status" value="1"/>
</dbReference>
<dbReference type="PANTHER" id="PTHR21060">
    <property type="entry name" value="ACETATE KINASE"/>
    <property type="match status" value="1"/>
</dbReference>
<dbReference type="PANTHER" id="PTHR21060:SF15">
    <property type="entry name" value="ACETATE KINASE-RELATED"/>
    <property type="match status" value="1"/>
</dbReference>
<dbReference type="Pfam" id="PF00871">
    <property type="entry name" value="Acetate_kinase"/>
    <property type="match status" value="1"/>
</dbReference>
<dbReference type="PIRSF" id="PIRSF000722">
    <property type="entry name" value="Acetate_prop_kin"/>
    <property type="match status" value="1"/>
</dbReference>
<dbReference type="PRINTS" id="PR00471">
    <property type="entry name" value="ACETATEKNASE"/>
</dbReference>
<dbReference type="SUPFAM" id="SSF53067">
    <property type="entry name" value="Actin-like ATPase domain"/>
    <property type="match status" value="2"/>
</dbReference>
<dbReference type="PROSITE" id="PS01075">
    <property type="entry name" value="ACETATE_KINASE_1"/>
    <property type="match status" value="1"/>
</dbReference>
<dbReference type="PROSITE" id="PS01076">
    <property type="entry name" value="ACETATE_KINASE_2"/>
    <property type="match status" value="1"/>
</dbReference>